<feature type="chain" id="PRO_0000442084" description="Protein EMBRYO SAC DEVELOPMENT ARREST 30">
    <location>
        <begin position="1"/>
        <end position="656"/>
    </location>
</feature>
<feature type="transmembrane region" description="Helical; Signal-anchor for type II membrane protein" evidence="8">
    <location>
        <begin position="9"/>
        <end position="29"/>
    </location>
</feature>
<feature type="region of interest" description="Disordered" evidence="3">
    <location>
        <begin position="381"/>
        <end position="426"/>
    </location>
</feature>
<feature type="region of interest" description="Disordered" evidence="3">
    <location>
        <begin position="631"/>
        <end position="656"/>
    </location>
</feature>
<feature type="compositionally biased region" description="Basic and acidic residues" evidence="3">
    <location>
        <begin position="401"/>
        <end position="412"/>
    </location>
</feature>
<feature type="compositionally biased region" description="Pro residues" evidence="3">
    <location>
        <begin position="417"/>
        <end position="426"/>
    </location>
</feature>
<feature type="compositionally biased region" description="Acidic residues" evidence="3">
    <location>
        <begin position="647"/>
        <end position="656"/>
    </location>
</feature>
<feature type="glycosylation site" description="N-linked (GlcNAc...) asparagine" evidence="2">
    <location>
        <position position="119"/>
    </location>
</feature>
<feature type="glycosylation site" description="N-linked (GlcNAc...) asparagine" evidence="2">
    <location>
        <position position="444"/>
    </location>
</feature>
<feature type="glycosylation site" description="N-linked (GlcNAc...) asparagine" evidence="2">
    <location>
        <position position="522"/>
    </location>
</feature>
<feature type="glycosylation site" description="N-linked (GlcNAc...) asparagine" evidence="2">
    <location>
        <position position="534"/>
    </location>
</feature>
<feature type="glycosylation site" description="N-linked (GlcNAc...) asparagine" evidence="2">
    <location>
        <position position="544"/>
    </location>
</feature>
<feature type="sequence conflict" description="In Ref. 3; BAF00006." evidence="8" ref="3">
    <original>L</original>
    <variation>M</variation>
    <location>
        <position position="221"/>
    </location>
</feature>
<keyword id="KW-0119">Carbohydrate metabolism</keyword>
<keyword id="KW-0294">Fucose metabolism</keyword>
<keyword id="KW-0325">Glycoprotein</keyword>
<keyword id="KW-0328">Glycosyltransferase</keyword>
<keyword id="KW-0472">Membrane</keyword>
<keyword id="KW-1185">Reference proteome</keyword>
<keyword id="KW-0735">Signal-anchor</keyword>
<keyword id="KW-0808">Transferase</keyword>
<keyword id="KW-0812">Transmembrane</keyword>
<keyword id="KW-1133">Transmembrane helix</keyword>
<sequence>MVFKSRIKWIALFVLILSMGSLVVHLSMTKSSGVQLAYSARDNLWQDFDSLLGAQDFRNKHLWRPVKSLETLQPYANPRNSYPAPSSKNNGFIYAKIFGGFDKIRSSICDLVTISRLLNATLVIPELQESLRSKGISNKFKSFSYLYDEEQFIAFLKNDVIVMKTLPESLKAARKRNEFPLFKPKNSASPKFYLEDVLPKLKKANVIGLIVSDGGCLQSALPASMPELQRLRCRVAFHALQLRPEIQVLAKEMVDRLRKSGQPFLAYHPGLVREKLAYHGCAELFQDIHSELIQYRRAQMIKQRFILEELIVDSRLRRDNGLCPLMPEEVGILLKALGYSQKAIIYLAGSEIFGGQRVLIPLRAMFPNLVDRTSLCSTEELSELVGPETPLPENTYKMPPRKSDKQLKEEWNKAGPRPRPLPPPPDRPIYQHEKEGWYGWLTENDTEPSPSPMDLRNQAHRLLWDALDFAVSVEADVFFPGFNNDGSGWPDFSSLVMGQRLYERPSSRTYRLDRKVIQELFNITREDMYHPNRNWTLRVRKHLNSSLGESGLIRQSMLSKPRSFLSHPLPECSCRTSALEDSRQIQSDDGRFLYGGEDECPKWIKSAGVEKSKTDDGDQPDYDHDLLAEQSETEEEFAKSKVASAFDQDEEWDPND</sequence>
<gene>
    <name evidence="6" type="primary">EDA30</name>
    <name evidence="8" type="synonym">OFUT22</name>
    <name evidence="7" type="synonym">TGD1</name>
    <name evidence="9" type="ordered locus">At3g03810</name>
    <name evidence="10" type="ORF">F20H23.17</name>
</gene>
<reference key="1">
    <citation type="journal article" date="2000" name="Nature">
        <title>Sequence and analysis of chromosome 3 of the plant Arabidopsis thaliana.</title>
        <authorList>
            <person name="Salanoubat M."/>
            <person name="Lemcke K."/>
            <person name="Rieger M."/>
            <person name="Ansorge W."/>
            <person name="Unseld M."/>
            <person name="Fartmann B."/>
            <person name="Valle G."/>
            <person name="Bloecker H."/>
            <person name="Perez-Alonso M."/>
            <person name="Obermaier B."/>
            <person name="Delseny M."/>
            <person name="Boutry M."/>
            <person name="Grivell L.A."/>
            <person name="Mache R."/>
            <person name="Puigdomenech P."/>
            <person name="De Simone V."/>
            <person name="Choisne N."/>
            <person name="Artiguenave F."/>
            <person name="Robert C."/>
            <person name="Brottier P."/>
            <person name="Wincker P."/>
            <person name="Cattolico L."/>
            <person name="Weissenbach J."/>
            <person name="Saurin W."/>
            <person name="Quetier F."/>
            <person name="Schaefer M."/>
            <person name="Mueller-Auer S."/>
            <person name="Gabel C."/>
            <person name="Fuchs M."/>
            <person name="Benes V."/>
            <person name="Wurmbach E."/>
            <person name="Drzonek H."/>
            <person name="Erfle H."/>
            <person name="Jordan N."/>
            <person name="Bangert S."/>
            <person name="Wiedelmann R."/>
            <person name="Kranz H."/>
            <person name="Voss H."/>
            <person name="Holland R."/>
            <person name="Brandt P."/>
            <person name="Nyakatura G."/>
            <person name="Vezzi A."/>
            <person name="D'Angelo M."/>
            <person name="Pallavicini A."/>
            <person name="Toppo S."/>
            <person name="Simionati B."/>
            <person name="Conrad A."/>
            <person name="Hornischer K."/>
            <person name="Kauer G."/>
            <person name="Loehnert T.-H."/>
            <person name="Nordsiek G."/>
            <person name="Reichelt J."/>
            <person name="Scharfe M."/>
            <person name="Schoen O."/>
            <person name="Bargues M."/>
            <person name="Terol J."/>
            <person name="Climent J."/>
            <person name="Navarro P."/>
            <person name="Collado C."/>
            <person name="Perez-Perez A."/>
            <person name="Ottenwaelder B."/>
            <person name="Duchemin D."/>
            <person name="Cooke R."/>
            <person name="Laudie M."/>
            <person name="Berger-Llauro C."/>
            <person name="Purnelle B."/>
            <person name="Masuy D."/>
            <person name="de Haan M."/>
            <person name="Maarse A.C."/>
            <person name="Alcaraz J.-P."/>
            <person name="Cottet A."/>
            <person name="Casacuberta E."/>
            <person name="Monfort A."/>
            <person name="Argiriou A."/>
            <person name="Flores M."/>
            <person name="Liguori R."/>
            <person name="Vitale D."/>
            <person name="Mannhaupt G."/>
            <person name="Haase D."/>
            <person name="Schoof H."/>
            <person name="Rudd S."/>
            <person name="Zaccaria P."/>
            <person name="Mewes H.-W."/>
            <person name="Mayer K.F.X."/>
            <person name="Kaul S."/>
            <person name="Town C.D."/>
            <person name="Koo H.L."/>
            <person name="Tallon L.J."/>
            <person name="Jenkins J."/>
            <person name="Rooney T."/>
            <person name="Rizzo M."/>
            <person name="Walts A."/>
            <person name="Utterback T."/>
            <person name="Fujii C.Y."/>
            <person name="Shea T.P."/>
            <person name="Creasy T.H."/>
            <person name="Haas B."/>
            <person name="Maiti R."/>
            <person name="Wu D."/>
            <person name="Peterson J."/>
            <person name="Van Aken S."/>
            <person name="Pai G."/>
            <person name="Militscher J."/>
            <person name="Sellers P."/>
            <person name="Gill J.E."/>
            <person name="Feldblyum T.V."/>
            <person name="Preuss D."/>
            <person name="Lin X."/>
            <person name="Nierman W.C."/>
            <person name="Salzberg S.L."/>
            <person name="White O."/>
            <person name="Venter J.C."/>
            <person name="Fraser C.M."/>
            <person name="Kaneko T."/>
            <person name="Nakamura Y."/>
            <person name="Sato S."/>
            <person name="Kato T."/>
            <person name="Asamizu E."/>
            <person name="Sasamoto S."/>
            <person name="Kimura T."/>
            <person name="Idesawa K."/>
            <person name="Kawashima K."/>
            <person name="Kishida Y."/>
            <person name="Kiyokawa C."/>
            <person name="Kohara M."/>
            <person name="Matsumoto M."/>
            <person name="Matsuno A."/>
            <person name="Muraki A."/>
            <person name="Nakayama S."/>
            <person name="Nakazaki N."/>
            <person name="Shinpo S."/>
            <person name="Takeuchi C."/>
            <person name="Wada T."/>
            <person name="Watanabe A."/>
            <person name="Yamada M."/>
            <person name="Yasuda M."/>
            <person name="Tabata S."/>
        </authorList>
    </citation>
    <scope>NUCLEOTIDE SEQUENCE [LARGE SCALE GENOMIC DNA]</scope>
    <source>
        <strain>cv. Columbia</strain>
    </source>
</reference>
<reference key="2">
    <citation type="journal article" date="2017" name="Plant J.">
        <title>Araport11: a complete reannotation of the Arabidopsis thaliana reference genome.</title>
        <authorList>
            <person name="Cheng C.Y."/>
            <person name="Krishnakumar V."/>
            <person name="Chan A.P."/>
            <person name="Thibaud-Nissen F."/>
            <person name="Schobel S."/>
            <person name="Town C.D."/>
        </authorList>
    </citation>
    <scope>GENOME REANNOTATION</scope>
    <source>
        <strain>cv. Columbia</strain>
    </source>
</reference>
<reference key="3">
    <citation type="submission" date="2006-07" db="EMBL/GenBank/DDBJ databases">
        <title>Large-scale analysis of RIKEN Arabidopsis full-length (RAFL) cDNAs.</title>
        <authorList>
            <person name="Totoki Y."/>
            <person name="Seki M."/>
            <person name="Ishida J."/>
            <person name="Nakajima M."/>
            <person name="Enju A."/>
            <person name="Kamiya A."/>
            <person name="Narusaka M."/>
            <person name="Shin-i T."/>
            <person name="Nakagawa M."/>
            <person name="Sakamoto N."/>
            <person name="Oishi K."/>
            <person name="Kohara Y."/>
            <person name="Kobayashi M."/>
            <person name="Toyoda A."/>
            <person name="Sakaki Y."/>
            <person name="Sakurai T."/>
            <person name="Iida K."/>
            <person name="Akiyama K."/>
            <person name="Satou M."/>
            <person name="Toyoda T."/>
            <person name="Konagaya A."/>
            <person name="Carninci P."/>
            <person name="Kawai J."/>
            <person name="Hayashizaki Y."/>
            <person name="Shinozaki K."/>
        </authorList>
    </citation>
    <scope>NUCLEOTIDE SEQUENCE [LARGE SCALE MRNA]</scope>
    <source>
        <strain>cv. Columbia</strain>
    </source>
</reference>
<reference key="4">
    <citation type="journal article" date="2005" name="Development">
        <title>Genetic and molecular identification of genes required for female gametophyte development and function in Arabidopsis.</title>
        <authorList>
            <person name="Pagnussat G.C."/>
            <person name="Yu H.-J."/>
            <person name="Ngo Q.A."/>
            <person name="Rajani S."/>
            <person name="Mayalagu S."/>
            <person name="Johnson C.S."/>
            <person name="Capron A."/>
            <person name="Xie L.-F."/>
            <person name="Ye D."/>
            <person name="Sundaresan V."/>
        </authorList>
    </citation>
    <scope>DISRUPTION PHENOTYPE</scope>
</reference>
<reference key="5">
    <citation type="journal article" date="2009" name="Genetics">
        <title>A collection of Ds insertional mutants associated with defects in male gametophyte development and function in Arabidopsis thaliana.</title>
        <authorList>
            <person name="Boavida L.C."/>
            <person name="Shuai B."/>
            <person name="Yu H.J."/>
            <person name="Pagnussat G.C."/>
            <person name="Sundaresan V."/>
            <person name="McCormick S."/>
        </authorList>
    </citation>
    <scope>DISRUPTION PHENOTYPE</scope>
</reference>
<reference key="6">
    <citation type="journal article" date="2012" name="Front. Plant Sci.">
        <title>Plant glycosyltransferases beyond CAZy: a perspective on DUF families.</title>
        <authorList>
            <person name="Hansen S.F."/>
            <person name="Harholt J."/>
            <person name="Oikawa A."/>
            <person name="Scheller H.V."/>
        </authorList>
    </citation>
    <scope>GENE FAMILY</scope>
    <scope>REVIEW</scope>
</reference>
<reference key="7">
    <citation type="journal article" date="2012" name="PLoS ONE">
        <title>The FRIABLE1 gene product affects cell adhesion in Arabidopsis.</title>
        <authorList>
            <person name="Neumetzler L."/>
            <person name="Humphrey T."/>
            <person name="Lumba S."/>
            <person name="Snyder S."/>
            <person name="Yeats T.H."/>
            <person name="Usadel B."/>
            <person name="Vasilevski A."/>
            <person name="Patel J."/>
            <person name="Rose J.K."/>
            <person name="Persson S."/>
            <person name="Bonetta D."/>
        </authorList>
    </citation>
    <scope>GENE FAMILY</scope>
</reference>
<reference key="8">
    <citation type="journal article" date="2012" name="PLoS ONE">
        <title>Identification of putative rhamnogalacturonan-II specific glycosyltransferases in Arabidopsis using a combination of bioinformatics approaches.</title>
        <authorList>
            <person name="Voxeur A."/>
            <person name="Andre A."/>
            <person name="Breton C."/>
            <person name="Lerouge P."/>
        </authorList>
    </citation>
    <scope>GENE FAMILY</scope>
</reference>
<reference key="9">
    <citation type="journal article" date="2013" name="Plant J.">
        <title>Identification of an additional protein involved in mannan biosynthesis.</title>
        <authorList>
            <person name="Wang Y."/>
            <person name="Mortimer J.C."/>
            <person name="Davis J."/>
            <person name="Dupree P."/>
            <person name="Keegstra K."/>
        </authorList>
    </citation>
    <scope>GENE FAMILY</scope>
</reference>
<reference key="10">
    <citation type="journal article" date="2014" name="Plant J.">
        <title>The plant glycosyltransferase clone collection for functional genomics.</title>
        <authorList>
            <person name="Lao J."/>
            <person name="Oikawa A."/>
            <person name="Bromley J.R."/>
            <person name="McInerney P."/>
            <person name="Suttangkakul A."/>
            <person name="Smith-Moritz A.M."/>
            <person name="Plahar H."/>
            <person name="Chiu T.-Y."/>
            <person name="Gonzalez Fernandez-Nino S.M.G."/>
            <person name="Ebert B."/>
            <person name="Yang F."/>
            <person name="Christiansen K.M."/>
            <person name="Hansen S.F."/>
            <person name="Stonebloom S."/>
            <person name="Adams P.D."/>
            <person name="Ronald P.C."/>
            <person name="Hillson N.J."/>
            <person name="Hadi M.Z."/>
            <person name="Vega-Sanchez M.E."/>
            <person name="Loque D."/>
            <person name="Scheller H.V."/>
            <person name="Heazlewood J.L."/>
        </authorList>
    </citation>
    <scope>WEB RESOURCE</scope>
</reference>
<protein>
    <recommendedName>
        <fullName evidence="6">Protein EMBRYO SAC DEVELOPMENT ARREST 30</fullName>
        <ecNumber evidence="8">2.4.1.-</ecNumber>
    </recommendedName>
    <alternativeName>
        <fullName evidence="8">O-fucosyltransferase 22</fullName>
        <shortName evidence="8">O-FucT-22</shortName>
    </alternativeName>
    <alternativeName>
        <fullName evidence="8">O-fucosyltransferase family protein</fullName>
    </alternativeName>
    <alternativeName>
        <fullName evidence="7">Protein TUBE GROWTH DEFECTIVE 1</fullName>
    </alternativeName>
</protein>
<name>EDA30_ARATH</name>
<organism>
    <name type="scientific">Arabidopsis thaliana</name>
    <name type="common">Mouse-ear cress</name>
    <dbReference type="NCBI Taxonomy" id="3702"/>
    <lineage>
        <taxon>Eukaryota</taxon>
        <taxon>Viridiplantae</taxon>
        <taxon>Streptophyta</taxon>
        <taxon>Embryophyta</taxon>
        <taxon>Tracheophyta</taxon>
        <taxon>Spermatophyta</taxon>
        <taxon>Magnoliopsida</taxon>
        <taxon>eudicotyledons</taxon>
        <taxon>Gunneridae</taxon>
        <taxon>Pentapetalae</taxon>
        <taxon>rosids</taxon>
        <taxon>malvids</taxon>
        <taxon>Brassicales</taxon>
        <taxon>Brassicaceae</taxon>
        <taxon>Camelineae</taxon>
        <taxon>Arabidopsis</taxon>
    </lineage>
</organism>
<evidence type="ECO:0000255" key="1"/>
<evidence type="ECO:0000255" key="2">
    <source>
        <dbReference type="PROSITE-ProRule" id="PRU00498"/>
    </source>
</evidence>
<evidence type="ECO:0000256" key="3">
    <source>
        <dbReference type="SAM" id="MobiDB-lite"/>
    </source>
</evidence>
<evidence type="ECO:0000269" key="4">
    <source>
    </source>
</evidence>
<evidence type="ECO:0000269" key="5">
    <source>
    </source>
</evidence>
<evidence type="ECO:0000303" key="6">
    <source>
    </source>
</evidence>
<evidence type="ECO:0000303" key="7">
    <source>
    </source>
</evidence>
<evidence type="ECO:0000305" key="8"/>
<evidence type="ECO:0000312" key="9">
    <source>
        <dbReference type="Araport" id="AT3G03810"/>
    </source>
</evidence>
<evidence type="ECO:0000312" key="10">
    <source>
        <dbReference type="EMBL" id="AAF00637.1"/>
    </source>
</evidence>
<accession>F4J2C8</accession>
<accession>Q0WS93</accession>
<accession>Q9SRV8</accession>
<dbReference type="EC" id="2.4.1.-" evidence="8"/>
<dbReference type="EMBL" id="AC009540">
    <property type="protein sequence ID" value="AAF00637.1"/>
    <property type="status" value="ALT_INIT"/>
    <property type="molecule type" value="Genomic_DNA"/>
</dbReference>
<dbReference type="EMBL" id="CP002686">
    <property type="protein sequence ID" value="AEE73996.1"/>
    <property type="molecule type" value="Genomic_DNA"/>
</dbReference>
<dbReference type="EMBL" id="CP002686">
    <property type="protein sequence ID" value="ANM63558.1"/>
    <property type="molecule type" value="Genomic_DNA"/>
</dbReference>
<dbReference type="EMBL" id="AK228044">
    <property type="protein sequence ID" value="BAF00006.1"/>
    <property type="molecule type" value="mRNA"/>
</dbReference>
<dbReference type="RefSeq" id="NP_001325638.1">
    <property type="nucleotide sequence ID" value="NM_001337489.1"/>
</dbReference>
<dbReference type="RefSeq" id="NP_187031.2">
    <property type="nucleotide sequence ID" value="NM_111252.5"/>
</dbReference>
<dbReference type="FunCoup" id="F4J2C8">
    <property type="interactions" value="1994"/>
</dbReference>
<dbReference type="GlyCosmos" id="F4J2C8">
    <property type="glycosylation" value="5 sites, No reported glycans"/>
</dbReference>
<dbReference type="GlyGen" id="F4J2C8">
    <property type="glycosylation" value="5 sites"/>
</dbReference>
<dbReference type="PaxDb" id="3702-AT3G03810.1"/>
<dbReference type="ProteomicsDB" id="247060"/>
<dbReference type="EnsemblPlants" id="AT3G03810.1">
    <property type="protein sequence ID" value="AT3G03810.1"/>
    <property type="gene ID" value="AT3G03810"/>
</dbReference>
<dbReference type="EnsemblPlants" id="AT3G03810.2">
    <property type="protein sequence ID" value="AT3G03810.2"/>
    <property type="gene ID" value="AT3G03810"/>
</dbReference>
<dbReference type="GeneID" id="821131"/>
<dbReference type="Gramene" id="AT3G03810.1">
    <property type="protein sequence ID" value="AT3G03810.1"/>
    <property type="gene ID" value="AT3G03810"/>
</dbReference>
<dbReference type="Gramene" id="AT3G03810.2">
    <property type="protein sequence ID" value="AT3G03810.2"/>
    <property type="gene ID" value="AT3G03810"/>
</dbReference>
<dbReference type="KEGG" id="ath:AT3G03810"/>
<dbReference type="Araport" id="AT3G03810"/>
<dbReference type="TAIR" id="AT3G03810">
    <property type="gene designation" value="EDA30"/>
</dbReference>
<dbReference type="eggNOG" id="ENOG502QQP9">
    <property type="taxonomic scope" value="Eukaryota"/>
</dbReference>
<dbReference type="HOGENOM" id="CLU_020836_0_0_1"/>
<dbReference type="InParanoid" id="F4J2C8"/>
<dbReference type="OMA" id="PEYYVTE"/>
<dbReference type="PRO" id="PR:F4J2C8"/>
<dbReference type="Proteomes" id="UP000006548">
    <property type="component" value="Chromosome 3"/>
</dbReference>
<dbReference type="ExpressionAtlas" id="F4J2C8">
    <property type="expression patterns" value="baseline and differential"/>
</dbReference>
<dbReference type="GO" id="GO:0009507">
    <property type="term" value="C:chloroplast"/>
    <property type="evidence" value="ECO:0007005"/>
    <property type="project" value="TAIR"/>
</dbReference>
<dbReference type="GO" id="GO:0005794">
    <property type="term" value="C:Golgi apparatus"/>
    <property type="evidence" value="ECO:0007005"/>
    <property type="project" value="TAIR"/>
</dbReference>
<dbReference type="GO" id="GO:0016020">
    <property type="term" value="C:membrane"/>
    <property type="evidence" value="ECO:0007669"/>
    <property type="project" value="UniProtKB-SubCell"/>
</dbReference>
<dbReference type="GO" id="GO:0016757">
    <property type="term" value="F:glycosyltransferase activity"/>
    <property type="evidence" value="ECO:0007669"/>
    <property type="project" value="UniProtKB-KW"/>
</dbReference>
<dbReference type="GO" id="GO:0006004">
    <property type="term" value="P:fucose metabolic process"/>
    <property type="evidence" value="ECO:0007669"/>
    <property type="project" value="UniProtKB-KW"/>
</dbReference>
<dbReference type="GO" id="GO:0010197">
    <property type="term" value="P:polar nucleus fusion"/>
    <property type="evidence" value="ECO:0000315"/>
    <property type="project" value="TAIR"/>
</dbReference>
<dbReference type="GO" id="GO:0048868">
    <property type="term" value="P:pollen tube development"/>
    <property type="evidence" value="ECO:0000315"/>
    <property type="project" value="TAIR"/>
</dbReference>
<dbReference type="CDD" id="cd11299">
    <property type="entry name" value="O-FucT_plant"/>
    <property type="match status" value="1"/>
</dbReference>
<dbReference type="InterPro" id="IPR024709">
    <property type="entry name" value="FucosylTrfase_pln"/>
</dbReference>
<dbReference type="InterPro" id="IPR019378">
    <property type="entry name" value="GDP-Fuc_O-FucTrfase"/>
</dbReference>
<dbReference type="PANTHER" id="PTHR31741">
    <property type="entry name" value="OS02G0726500 PROTEIN-RELATED"/>
    <property type="match status" value="1"/>
</dbReference>
<dbReference type="PANTHER" id="PTHR31741:SF6">
    <property type="entry name" value="PROTEIN EMBRYO SAC DEVELOPMENT ARREST 30"/>
    <property type="match status" value="1"/>
</dbReference>
<dbReference type="Pfam" id="PF10250">
    <property type="entry name" value="O-FucT"/>
    <property type="match status" value="1"/>
</dbReference>
<dbReference type="PIRSF" id="PIRSF009360">
    <property type="entry name" value="UCP009360"/>
    <property type="match status" value="1"/>
</dbReference>
<proteinExistence type="evidence at transcript level"/>
<comment type="pathway">
    <text evidence="8">Glycan metabolism.</text>
</comment>
<comment type="subcellular location">
    <subcellularLocation>
        <location evidence="1">Membrane</location>
        <topology evidence="8">Single-pass type II membrane protein</topology>
    </subcellularLocation>
</comment>
<comment type="disruption phenotype">
    <text evidence="4 5">Embryo sac development arrest. Unfused polar nuclei (PubMed:15634699). Pollen tube growth defective (PubMed:19237690).</text>
</comment>
<comment type="similarity">
    <text evidence="8">Belongs to the glycosyltransferase GT106 family.</text>
</comment>
<comment type="sequence caution" evidence="8">
    <conflict type="erroneous initiation">
        <sequence resource="EMBL-CDS" id="AAF00637"/>
    </conflict>
    <text>Truncated N-terminus.</text>
</comment>